<name>Y054_SIFVH</name>
<keyword id="KW-1185">Reference proteome</keyword>
<protein>
    <recommendedName>
        <fullName>Uncharacterized protein 54</fullName>
    </recommendedName>
</protein>
<sequence length="350" mass="38334">MSNMSSTSTSVTQPAYTEAFMSAIATSVTGVNVSQYPSPSGYHVYLSSQTGIVDNTTDVSVYNVSDTYQNNNEVTSVTFIAIFKNLSSYTFSEILFYTQVNGQDFMQVAQFIPSSAIQKSSGYALVIMITLSIATPVYIIDAIQDVQQLCTNYCINVNCNAVGGNIETSYLPFSLFNLVFLYLLGVNTNTVEQSPSTQQTASEYANCINSCVQYCGTNTGLECIACLSSCRTYLLENPLFTFLLANNIQNVMELLPQGINTIYTVNVCSGKVATLTPQNFQNNLNVVSQSEIQYTIQFYLPGTNELFNALQIMISTLNTNYNYSLGVLYFTGVPLPSGETFILEVTVSES</sequence>
<organism>
    <name type="scientific">Sulfolobus islandicus filamentous virus (isolate Iceland/Hveragerdi)</name>
    <name type="common">SIFV</name>
    <dbReference type="NCBI Taxonomy" id="654908"/>
    <lineage>
        <taxon>Viruses</taxon>
        <taxon>Adnaviria</taxon>
        <taxon>Zilligvirae</taxon>
        <taxon>Taleaviricota</taxon>
        <taxon>Tokiviricetes</taxon>
        <taxon>Ligamenvirales</taxon>
        <taxon>Lipothrixviridae</taxon>
        <taxon>Betalipothrixvirus</taxon>
        <taxon>Sulfolobus islandicus filamentous virus</taxon>
    </lineage>
</organism>
<feature type="chain" id="PRO_0000385420" description="Uncharacterized protein 54">
    <location>
        <begin position="1"/>
        <end position="350"/>
    </location>
</feature>
<dbReference type="EMBL" id="AF440571">
    <property type="protein sequence ID" value="AAL27763.1"/>
    <property type="molecule type" value="Genomic_DNA"/>
</dbReference>
<dbReference type="RefSeq" id="NP_445717.1">
    <property type="nucleotide sequence ID" value="NC_003214.2"/>
</dbReference>
<dbReference type="GeneID" id="922340"/>
<dbReference type="KEGG" id="vg:922340"/>
<dbReference type="Proteomes" id="UP000007017">
    <property type="component" value="Segment"/>
</dbReference>
<accession>Q914H8</accession>
<organismHost>
    <name type="scientific">Saccharolobus islandicus</name>
    <name type="common">Sulfolobus islandicus</name>
    <dbReference type="NCBI Taxonomy" id="43080"/>
</organismHost>
<proteinExistence type="predicted"/>
<reference key="1">
    <citation type="journal article" date="2000" name="Virology">
        <title>A novel lipothrixvirus, SIFV, of the extremely thermophilic crenarchaeon Sulfolobus.</title>
        <authorList>
            <person name="Arnold H.P."/>
            <person name="Zillig W."/>
            <person name="Ziese U."/>
            <person name="Holz I."/>
            <person name="Crosby M."/>
            <person name="Utterback T."/>
            <person name="Weidmann J.F."/>
            <person name="Umayam L.A."/>
            <person name="Teffera K."/>
            <person name="Kristjanson J.K."/>
            <person name="Klenk H.P."/>
            <person name="Nelson K.E."/>
            <person name="Fraser C.M."/>
        </authorList>
    </citation>
    <scope>NUCLEOTIDE SEQUENCE [GENOMIC DNA]</scope>
</reference>
<gene>
    <name type="primary">SIFV0054</name>
</gene>